<proteinExistence type="inferred from homology"/>
<feature type="chain" id="PRO_0000255916" description="7-cyano-7-deazaguanine synthase">
    <location>
        <begin position="1"/>
        <end position="222"/>
    </location>
</feature>
<feature type="binding site" evidence="1">
    <location>
        <begin position="8"/>
        <end position="18"/>
    </location>
    <ligand>
        <name>ATP</name>
        <dbReference type="ChEBI" id="CHEBI:30616"/>
    </ligand>
</feature>
<feature type="binding site" evidence="1">
    <location>
        <position position="187"/>
    </location>
    <ligand>
        <name>Zn(2+)</name>
        <dbReference type="ChEBI" id="CHEBI:29105"/>
    </ligand>
</feature>
<feature type="binding site" evidence="1">
    <location>
        <position position="197"/>
    </location>
    <ligand>
        <name>Zn(2+)</name>
        <dbReference type="ChEBI" id="CHEBI:29105"/>
    </ligand>
</feature>
<feature type="binding site" evidence="1">
    <location>
        <position position="200"/>
    </location>
    <ligand>
        <name>Zn(2+)</name>
        <dbReference type="ChEBI" id="CHEBI:29105"/>
    </ligand>
</feature>
<feature type="binding site" evidence="1">
    <location>
        <position position="203"/>
    </location>
    <ligand>
        <name>Zn(2+)</name>
        <dbReference type="ChEBI" id="CHEBI:29105"/>
    </ligand>
</feature>
<gene>
    <name evidence="1" type="primary">queC</name>
    <name type="ordered locus">ABO_0762</name>
</gene>
<reference key="1">
    <citation type="journal article" date="2006" name="Nat. Biotechnol.">
        <title>Genome sequence of the ubiquitous hydrocarbon-degrading marine bacterium Alcanivorax borkumensis.</title>
        <authorList>
            <person name="Schneiker S."/>
            <person name="Martins dos Santos V.A.P."/>
            <person name="Bartels D."/>
            <person name="Bekel T."/>
            <person name="Brecht M."/>
            <person name="Buhrmester J."/>
            <person name="Chernikova T.N."/>
            <person name="Denaro R."/>
            <person name="Ferrer M."/>
            <person name="Gertler C."/>
            <person name="Goesmann A."/>
            <person name="Golyshina O.V."/>
            <person name="Kaminski F."/>
            <person name="Khachane A.N."/>
            <person name="Lang S."/>
            <person name="Linke B."/>
            <person name="McHardy A.C."/>
            <person name="Meyer F."/>
            <person name="Nechitaylo T."/>
            <person name="Puehler A."/>
            <person name="Regenhardt D."/>
            <person name="Rupp O."/>
            <person name="Sabirova J.S."/>
            <person name="Selbitschka W."/>
            <person name="Yakimov M.M."/>
            <person name="Timmis K.N."/>
            <person name="Vorhoelter F.-J."/>
            <person name="Weidner S."/>
            <person name="Kaiser O."/>
            <person name="Golyshin P.N."/>
        </authorList>
    </citation>
    <scope>NUCLEOTIDE SEQUENCE [LARGE SCALE GENOMIC DNA]</scope>
    <source>
        <strain>ATCC 700651 / DSM 11573 / NCIMB 13689 / SK2</strain>
    </source>
</reference>
<keyword id="KW-0067">ATP-binding</keyword>
<keyword id="KW-0436">Ligase</keyword>
<keyword id="KW-0479">Metal-binding</keyword>
<keyword id="KW-0547">Nucleotide-binding</keyword>
<keyword id="KW-0671">Queuosine biosynthesis</keyword>
<keyword id="KW-1185">Reference proteome</keyword>
<keyword id="KW-0862">Zinc</keyword>
<organism>
    <name type="scientific">Alcanivorax borkumensis (strain ATCC 700651 / DSM 11573 / NCIMB 13689 / SK2)</name>
    <dbReference type="NCBI Taxonomy" id="393595"/>
    <lineage>
        <taxon>Bacteria</taxon>
        <taxon>Pseudomonadati</taxon>
        <taxon>Pseudomonadota</taxon>
        <taxon>Gammaproteobacteria</taxon>
        <taxon>Oceanospirillales</taxon>
        <taxon>Alcanivoracaceae</taxon>
        <taxon>Alcanivorax</taxon>
    </lineage>
</organism>
<evidence type="ECO:0000255" key="1">
    <source>
        <dbReference type="HAMAP-Rule" id="MF_01633"/>
    </source>
</evidence>
<evidence type="ECO:0000305" key="2"/>
<name>QUEC_ALCBS</name>
<dbReference type="EC" id="6.3.4.20" evidence="1"/>
<dbReference type="EMBL" id="AM286690">
    <property type="protein sequence ID" value="CAL16210.1"/>
    <property type="status" value="ALT_INIT"/>
    <property type="molecule type" value="Genomic_DNA"/>
</dbReference>
<dbReference type="RefSeq" id="WP_035460816.1">
    <property type="nucleotide sequence ID" value="NC_008260.1"/>
</dbReference>
<dbReference type="SMR" id="Q0VRI8"/>
<dbReference type="STRING" id="393595.ABO_0762"/>
<dbReference type="KEGG" id="abo:ABO_0762"/>
<dbReference type="eggNOG" id="COG0603">
    <property type="taxonomic scope" value="Bacteria"/>
</dbReference>
<dbReference type="HOGENOM" id="CLU_081854_1_0_6"/>
<dbReference type="OrthoDB" id="9789567at2"/>
<dbReference type="UniPathway" id="UPA00391"/>
<dbReference type="Proteomes" id="UP000008871">
    <property type="component" value="Chromosome"/>
</dbReference>
<dbReference type="GO" id="GO:0005524">
    <property type="term" value="F:ATP binding"/>
    <property type="evidence" value="ECO:0007669"/>
    <property type="project" value="UniProtKB-UniRule"/>
</dbReference>
<dbReference type="GO" id="GO:0016879">
    <property type="term" value="F:ligase activity, forming carbon-nitrogen bonds"/>
    <property type="evidence" value="ECO:0007669"/>
    <property type="project" value="UniProtKB-UniRule"/>
</dbReference>
<dbReference type="GO" id="GO:0008270">
    <property type="term" value="F:zinc ion binding"/>
    <property type="evidence" value="ECO:0007669"/>
    <property type="project" value="UniProtKB-UniRule"/>
</dbReference>
<dbReference type="GO" id="GO:0008616">
    <property type="term" value="P:queuosine biosynthetic process"/>
    <property type="evidence" value="ECO:0007669"/>
    <property type="project" value="UniProtKB-UniRule"/>
</dbReference>
<dbReference type="CDD" id="cd01995">
    <property type="entry name" value="QueC-like"/>
    <property type="match status" value="1"/>
</dbReference>
<dbReference type="FunFam" id="3.40.50.620:FF:000131">
    <property type="entry name" value="7-cyano-7-deazaguanine synthase"/>
    <property type="match status" value="1"/>
</dbReference>
<dbReference type="Gene3D" id="3.40.50.620">
    <property type="entry name" value="HUPs"/>
    <property type="match status" value="1"/>
</dbReference>
<dbReference type="HAMAP" id="MF_01633">
    <property type="entry name" value="QueC"/>
    <property type="match status" value="1"/>
</dbReference>
<dbReference type="InterPro" id="IPR018317">
    <property type="entry name" value="QueC"/>
</dbReference>
<dbReference type="InterPro" id="IPR014729">
    <property type="entry name" value="Rossmann-like_a/b/a_fold"/>
</dbReference>
<dbReference type="NCBIfam" id="TIGR00364">
    <property type="entry name" value="7-cyano-7-deazaguanine synthase QueC"/>
    <property type="match status" value="1"/>
</dbReference>
<dbReference type="PANTHER" id="PTHR42914">
    <property type="entry name" value="7-CYANO-7-DEAZAGUANINE SYNTHASE"/>
    <property type="match status" value="1"/>
</dbReference>
<dbReference type="PANTHER" id="PTHR42914:SF1">
    <property type="entry name" value="7-CYANO-7-DEAZAGUANINE SYNTHASE"/>
    <property type="match status" value="1"/>
</dbReference>
<dbReference type="Pfam" id="PF06508">
    <property type="entry name" value="QueC"/>
    <property type="match status" value="1"/>
</dbReference>
<dbReference type="PIRSF" id="PIRSF006293">
    <property type="entry name" value="ExsB"/>
    <property type="match status" value="1"/>
</dbReference>
<dbReference type="SUPFAM" id="SSF52402">
    <property type="entry name" value="Adenine nucleotide alpha hydrolases-like"/>
    <property type="match status" value="1"/>
</dbReference>
<comment type="function">
    <text evidence="1">Catalyzes the ATP-dependent conversion of 7-carboxy-7-deazaguanine (CDG) to 7-cyano-7-deazaguanine (preQ(0)).</text>
</comment>
<comment type="catalytic activity">
    <reaction evidence="1">
        <text>7-carboxy-7-deazaguanine + NH4(+) + ATP = 7-cyano-7-deazaguanine + ADP + phosphate + H2O + H(+)</text>
        <dbReference type="Rhea" id="RHEA:27982"/>
        <dbReference type="ChEBI" id="CHEBI:15377"/>
        <dbReference type="ChEBI" id="CHEBI:15378"/>
        <dbReference type="ChEBI" id="CHEBI:28938"/>
        <dbReference type="ChEBI" id="CHEBI:30616"/>
        <dbReference type="ChEBI" id="CHEBI:43474"/>
        <dbReference type="ChEBI" id="CHEBI:45075"/>
        <dbReference type="ChEBI" id="CHEBI:61036"/>
        <dbReference type="ChEBI" id="CHEBI:456216"/>
        <dbReference type="EC" id="6.3.4.20"/>
    </reaction>
</comment>
<comment type="cofactor">
    <cofactor evidence="1">
        <name>Zn(2+)</name>
        <dbReference type="ChEBI" id="CHEBI:29105"/>
    </cofactor>
    <text evidence="1">Binds 1 zinc ion per subunit.</text>
</comment>
<comment type="pathway">
    <text evidence="1">Purine metabolism; 7-cyano-7-deazaguanine biosynthesis.</text>
</comment>
<comment type="similarity">
    <text evidence="1">Belongs to the QueC family.</text>
</comment>
<comment type="sequence caution" evidence="2">
    <conflict type="erroneous initiation">
        <sequence resource="EMBL-CDS" id="CAL16210"/>
    </conflict>
</comment>
<accession>Q0VRI8</accession>
<sequence length="222" mass="23500">MKKAVVLLSGGLDSATCLAIARDQGYACHTIAFDYGQRTRSELDAAERVSGVLGALSHRVIELGMGNIGGSALTDHSIEVPENGGDGIPVTYVPARNTVFLSLALGLAEVIDAQAIFIGVNAVDYSGYPDCRPAFIEAFQSMATLATKAGVEGRPMQIETPLMHLSKAQIIQRGVALGLDYGLTVSCYQADDHGNACGKCDSCRLRSQGFEDALVKDPTNYQ</sequence>
<protein>
    <recommendedName>
        <fullName evidence="1">7-cyano-7-deazaguanine synthase</fullName>
        <ecNumber evidence="1">6.3.4.20</ecNumber>
    </recommendedName>
    <alternativeName>
        <fullName evidence="1">7-cyano-7-carbaguanine synthase</fullName>
    </alternativeName>
    <alternativeName>
        <fullName evidence="1">PreQ(0) synthase</fullName>
    </alternativeName>
    <alternativeName>
        <fullName evidence="1">Queuosine biosynthesis protein QueC</fullName>
    </alternativeName>
</protein>